<feature type="chain" id="PRO_0000088692" description="Transmembrane protease serine 4">
    <location>
        <begin position="1"/>
        <end position="437"/>
    </location>
</feature>
<feature type="chain" id="PRO_0000451627" description="Transmembrane protease serine 4 catalytic chain">
    <location>
        <begin status="unknown"/>
        <end position="437"/>
    </location>
</feature>
<feature type="topological domain" description="Cytoplasmic" evidence="3">
    <location>
        <begin position="1"/>
        <end position="32"/>
    </location>
</feature>
<feature type="transmembrane region" description="Helical; Signal-anchor for type II membrane protein" evidence="3">
    <location>
        <begin position="33"/>
        <end position="53"/>
    </location>
</feature>
<feature type="topological domain" description="Extracellular" evidence="3">
    <location>
        <begin position="54"/>
        <end position="437"/>
    </location>
</feature>
<feature type="domain" description="LDL-receptor class A">
    <location>
        <begin position="61"/>
        <end position="93"/>
    </location>
</feature>
<feature type="domain" description="SRCR" evidence="4">
    <location>
        <begin position="94"/>
        <end position="204"/>
    </location>
</feature>
<feature type="domain" description="Peptidase S1" evidence="5">
    <location>
        <begin position="205"/>
        <end position="434"/>
    </location>
</feature>
<feature type="active site" description="Charge relay system" evidence="1">
    <location>
        <position position="245"/>
    </location>
</feature>
<feature type="active site" description="Charge relay system" evidence="1">
    <location>
        <position position="290"/>
    </location>
</feature>
<feature type="active site" description="Charge relay system" evidence="1">
    <location>
        <position position="387"/>
    </location>
</feature>
<feature type="site" description="Cleavage" evidence="3">
    <location>
        <begin position="204"/>
        <end position="205"/>
    </location>
</feature>
<feature type="glycosylation site" description="N-linked (GlcNAc...) asparagine" evidence="3">
    <location>
        <position position="130"/>
    </location>
</feature>
<feature type="glycosylation site" description="N-linked (GlcNAc...) asparagine" evidence="3">
    <location>
        <position position="178"/>
    </location>
</feature>
<feature type="disulfide bond" evidence="1">
    <location>
        <begin position="64"/>
        <end position="83"/>
    </location>
</feature>
<feature type="disulfide bond" evidence="1">
    <location>
        <begin position="77"/>
        <end position="92"/>
    </location>
</feature>
<feature type="disulfide bond" evidence="1">
    <location>
        <begin position="127"/>
        <end position="183"/>
    </location>
</feature>
<feature type="disulfide bond" evidence="1">
    <location>
        <begin position="140"/>
        <end position="193"/>
    </location>
</feature>
<feature type="disulfide bond" evidence="1">
    <location>
        <begin position="196"/>
        <end position="310"/>
    </location>
</feature>
<feature type="disulfide bond" evidence="1">
    <location>
        <begin position="230"/>
        <end position="246"/>
    </location>
</feature>
<feature type="disulfide bond" evidence="1">
    <location>
        <begin position="356"/>
        <end position="372"/>
    </location>
</feature>
<feature type="disulfide bond" evidence="1">
    <location>
        <begin position="383"/>
        <end position="410"/>
    </location>
</feature>
<feature type="splice variant" id="VSP_013116" description="In isoform 3 and isoform 4." evidence="15 16">
    <original>MLQ</original>
    <variation>M</variation>
    <location>
        <begin position="1"/>
        <end position="3"/>
    </location>
</feature>
<feature type="splice variant" id="VSP_054229" description="In isoform 4." evidence="15">
    <original>LDVKPLRKPRIPMETFRKVGIPIIIALLSLASIIIVVVLI</original>
    <variation>LV</variation>
    <location>
        <begin position="14"/>
        <end position="53"/>
    </location>
</feature>
<feature type="splice variant" id="VSP_013117" description="In isoform 2." evidence="14">
    <location>
        <begin position="147"/>
        <end position="151"/>
    </location>
</feature>
<feature type="sequence variant" id="VAR_024293" description="In dbSNP:rs1894176.">
    <original>R</original>
    <variation>Q</variation>
    <location>
        <position position="177"/>
    </location>
</feature>
<feature type="sequence variant" id="VAR_046505" description="In dbSNP:rs12270001.">
    <original>K</original>
    <variation>E</variation>
    <location>
        <position position="198"/>
    </location>
</feature>
<feature type="sequence variant" id="VAR_046506" description="In dbSNP:rs1941635." evidence="6 7 8 9 12">
    <original>V</original>
    <variation>G</variation>
    <location>
        <position position="208"/>
    </location>
</feature>
<feature type="mutagenesis site" description="Abolishes protease activity." evidence="10">
    <original>D</original>
    <variation>A</variation>
    <location>
        <position position="290"/>
    </location>
</feature>
<feature type="mutagenesis site" description="Abolishes protease activity." evidence="10">
    <original>S</original>
    <variation>A</variation>
    <location>
        <position position="387"/>
    </location>
</feature>
<feature type="sequence conflict" description="In Ref. 2; AAF31436." evidence="17" ref="2">
    <original>L</original>
    <variation>V</variation>
    <location>
        <position position="2"/>
    </location>
</feature>
<accession>Q9NRS4</accession>
<accession>A8MU84</accession>
<accession>B0YJB0</accession>
<accession>B7Z8C5</accession>
<accession>E7ERX8</accession>
<accession>Q5XKQ6</accession>
<accession>Q6UX37</accession>
<accession>Q9NZA5</accession>
<evidence type="ECO:0000250" key="1"/>
<evidence type="ECO:0000250" key="2">
    <source>
        <dbReference type="UniProtKB" id="Q8VCA5"/>
    </source>
</evidence>
<evidence type="ECO:0000255" key="3"/>
<evidence type="ECO:0000255" key="4">
    <source>
        <dbReference type="PROSITE-ProRule" id="PRU00196"/>
    </source>
</evidence>
<evidence type="ECO:0000255" key="5">
    <source>
        <dbReference type="PROSITE-ProRule" id="PRU00274"/>
    </source>
</evidence>
<evidence type="ECO:0000269" key="6">
    <source>
    </source>
</evidence>
<evidence type="ECO:0000269" key="7">
    <source>
    </source>
</evidence>
<evidence type="ECO:0000269" key="8">
    <source>
    </source>
</evidence>
<evidence type="ECO:0000269" key="9">
    <source>
    </source>
</evidence>
<evidence type="ECO:0000269" key="10">
    <source>
    </source>
</evidence>
<evidence type="ECO:0000269" key="11">
    <source>
    </source>
</evidence>
<evidence type="ECO:0000269" key="12">
    <source ref="2"/>
</evidence>
<evidence type="ECO:0000303" key="13">
    <source>
    </source>
</evidence>
<evidence type="ECO:0000303" key="14">
    <source>
    </source>
</evidence>
<evidence type="ECO:0000303" key="15">
    <source>
    </source>
</evidence>
<evidence type="ECO:0000303" key="16">
    <source>
    </source>
</evidence>
<evidence type="ECO:0000305" key="17"/>
<evidence type="ECO:0000305" key="18">
    <source>
    </source>
</evidence>
<evidence type="ECO:0000305" key="19">
    <source>
    </source>
</evidence>
<evidence type="ECO:0000312" key="20">
    <source>
        <dbReference type="HGNC" id="HGNC:11878"/>
    </source>
</evidence>
<organism>
    <name type="scientific">Homo sapiens</name>
    <name type="common">Human</name>
    <dbReference type="NCBI Taxonomy" id="9606"/>
    <lineage>
        <taxon>Eukaryota</taxon>
        <taxon>Metazoa</taxon>
        <taxon>Chordata</taxon>
        <taxon>Craniata</taxon>
        <taxon>Vertebrata</taxon>
        <taxon>Euteleostomi</taxon>
        <taxon>Mammalia</taxon>
        <taxon>Eutheria</taxon>
        <taxon>Euarchontoglires</taxon>
        <taxon>Primates</taxon>
        <taxon>Haplorrhini</taxon>
        <taxon>Catarrhini</taxon>
        <taxon>Hominidae</taxon>
        <taxon>Homo</taxon>
    </lineage>
</organism>
<reference key="1">
    <citation type="journal article" date="2000" name="Cancer Res.">
        <title>A novel transmembrane serine protease (TMPRSS3) overexpressed in pancreatic cancer.</title>
        <authorList>
            <person name="Wallrapp C."/>
            <person name="Haehnel S."/>
            <person name="Mueller-Pillasch F."/>
            <person name="Burghardt B."/>
            <person name="Iwamura T."/>
            <person name="Ruthenbuerger M."/>
            <person name="Lerch M.M."/>
            <person name="Adler G."/>
            <person name="Gress T.M."/>
        </authorList>
    </citation>
    <scope>NUCLEOTIDE SEQUENCE [MRNA] (ISOFORM 1)</scope>
    <scope>VARIANT GLY-208</scope>
    <scope>TISSUE SPECIFICITY</scope>
    <source>
        <tissue>Pancreatic carcinoma</tissue>
    </source>
</reference>
<reference key="2">
    <citation type="submission" date="1999-12" db="EMBL/GenBank/DDBJ databases">
        <title>MT-SP2, a novel type II membrane serine protease expressed in trachea, colon, and small intestine: identification, cloning, and chromosomal localization.</title>
        <authorList>
            <person name="Smeekens S.S."/>
            <person name="Lorimer D.D."/>
            <person name="Wang E."/>
            <person name="Hou J."/>
            <person name="Linnevers C."/>
        </authorList>
    </citation>
    <scope>NUCLEOTIDE SEQUENCE [MRNA] (ISOFORM 1)</scope>
    <scope>VARIANT GLY-208</scope>
</reference>
<reference key="3">
    <citation type="journal article" date="2004" name="Nat. Genet.">
        <title>Complete sequencing and characterization of 21,243 full-length human cDNAs.</title>
        <authorList>
            <person name="Ota T."/>
            <person name="Suzuki Y."/>
            <person name="Nishikawa T."/>
            <person name="Otsuki T."/>
            <person name="Sugiyama T."/>
            <person name="Irie R."/>
            <person name="Wakamatsu A."/>
            <person name="Hayashi K."/>
            <person name="Sato H."/>
            <person name="Nagai K."/>
            <person name="Kimura K."/>
            <person name="Makita H."/>
            <person name="Sekine M."/>
            <person name="Obayashi M."/>
            <person name="Nishi T."/>
            <person name="Shibahara T."/>
            <person name="Tanaka T."/>
            <person name="Ishii S."/>
            <person name="Yamamoto J."/>
            <person name="Saito K."/>
            <person name="Kawai Y."/>
            <person name="Isono Y."/>
            <person name="Nakamura Y."/>
            <person name="Nagahari K."/>
            <person name="Murakami K."/>
            <person name="Yasuda T."/>
            <person name="Iwayanagi T."/>
            <person name="Wagatsuma M."/>
            <person name="Shiratori A."/>
            <person name="Sudo H."/>
            <person name="Hosoiri T."/>
            <person name="Kaku Y."/>
            <person name="Kodaira H."/>
            <person name="Kondo H."/>
            <person name="Sugawara M."/>
            <person name="Takahashi M."/>
            <person name="Kanda K."/>
            <person name="Yokoi T."/>
            <person name="Furuya T."/>
            <person name="Kikkawa E."/>
            <person name="Omura Y."/>
            <person name="Abe K."/>
            <person name="Kamihara K."/>
            <person name="Katsuta N."/>
            <person name="Sato K."/>
            <person name="Tanikawa M."/>
            <person name="Yamazaki M."/>
            <person name="Ninomiya K."/>
            <person name="Ishibashi T."/>
            <person name="Yamashita H."/>
            <person name="Murakawa K."/>
            <person name="Fujimori K."/>
            <person name="Tanai H."/>
            <person name="Kimata M."/>
            <person name="Watanabe M."/>
            <person name="Hiraoka S."/>
            <person name="Chiba Y."/>
            <person name="Ishida S."/>
            <person name="Ono Y."/>
            <person name="Takiguchi S."/>
            <person name="Watanabe S."/>
            <person name="Yosida M."/>
            <person name="Hotuta T."/>
            <person name="Kusano J."/>
            <person name="Kanehori K."/>
            <person name="Takahashi-Fujii A."/>
            <person name="Hara H."/>
            <person name="Tanase T.-O."/>
            <person name="Nomura Y."/>
            <person name="Togiya S."/>
            <person name="Komai F."/>
            <person name="Hara R."/>
            <person name="Takeuchi K."/>
            <person name="Arita M."/>
            <person name="Imose N."/>
            <person name="Musashino K."/>
            <person name="Yuuki H."/>
            <person name="Oshima A."/>
            <person name="Sasaki N."/>
            <person name="Aotsuka S."/>
            <person name="Yoshikawa Y."/>
            <person name="Matsunawa H."/>
            <person name="Ichihara T."/>
            <person name="Shiohata N."/>
            <person name="Sano S."/>
            <person name="Moriya S."/>
            <person name="Momiyama H."/>
            <person name="Satoh N."/>
            <person name="Takami S."/>
            <person name="Terashima Y."/>
            <person name="Suzuki O."/>
            <person name="Nakagawa S."/>
            <person name="Senoh A."/>
            <person name="Mizoguchi H."/>
            <person name="Goto Y."/>
            <person name="Shimizu F."/>
            <person name="Wakebe H."/>
            <person name="Hishigaki H."/>
            <person name="Watanabe T."/>
            <person name="Sugiyama A."/>
            <person name="Takemoto M."/>
            <person name="Kawakami B."/>
            <person name="Yamazaki M."/>
            <person name="Watanabe K."/>
            <person name="Kumagai A."/>
            <person name="Itakura S."/>
            <person name="Fukuzumi Y."/>
            <person name="Fujimori Y."/>
            <person name="Komiyama M."/>
            <person name="Tashiro H."/>
            <person name="Tanigami A."/>
            <person name="Fujiwara T."/>
            <person name="Ono T."/>
            <person name="Yamada K."/>
            <person name="Fujii Y."/>
            <person name="Ozaki K."/>
            <person name="Hirao M."/>
            <person name="Ohmori Y."/>
            <person name="Kawabata A."/>
            <person name="Hikiji T."/>
            <person name="Kobatake N."/>
            <person name="Inagaki H."/>
            <person name="Ikema Y."/>
            <person name="Okamoto S."/>
            <person name="Okitani R."/>
            <person name="Kawakami T."/>
            <person name="Noguchi S."/>
            <person name="Itoh T."/>
            <person name="Shigeta K."/>
            <person name="Senba T."/>
            <person name="Matsumura K."/>
            <person name="Nakajima Y."/>
            <person name="Mizuno T."/>
            <person name="Morinaga M."/>
            <person name="Sasaki M."/>
            <person name="Togashi T."/>
            <person name="Oyama M."/>
            <person name="Hata H."/>
            <person name="Watanabe M."/>
            <person name="Komatsu T."/>
            <person name="Mizushima-Sugano J."/>
            <person name="Satoh T."/>
            <person name="Shirai Y."/>
            <person name="Takahashi Y."/>
            <person name="Nakagawa K."/>
            <person name="Okumura K."/>
            <person name="Nagase T."/>
            <person name="Nomura N."/>
            <person name="Kikuchi H."/>
            <person name="Masuho Y."/>
            <person name="Yamashita R."/>
            <person name="Nakai K."/>
            <person name="Yada T."/>
            <person name="Nakamura Y."/>
            <person name="Ohara O."/>
            <person name="Isogai T."/>
            <person name="Sugano S."/>
        </authorList>
    </citation>
    <scope>NUCLEOTIDE SEQUENCE [LARGE SCALE MRNA] (ISOFORMS 1 AND 4)</scope>
    <scope>VARIANT GLY-208</scope>
    <source>
        <tissue>Colon</tissue>
    </source>
</reference>
<reference key="4">
    <citation type="journal article" date="2003" name="Genome Res.">
        <title>The secreted protein discovery initiative (SPDI), a large-scale effort to identify novel human secreted and transmembrane proteins: a bioinformatics assessment.</title>
        <authorList>
            <person name="Clark H.F."/>
            <person name="Gurney A.L."/>
            <person name="Abaya E."/>
            <person name="Baker K."/>
            <person name="Baldwin D.T."/>
            <person name="Brush J."/>
            <person name="Chen J."/>
            <person name="Chow B."/>
            <person name="Chui C."/>
            <person name="Crowley C."/>
            <person name="Currell B."/>
            <person name="Deuel B."/>
            <person name="Dowd P."/>
            <person name="Eaton D."/>
            <person name="Foster J.S."/>
            <person name="Grimaldi C."/>
            <person name="Gu Q."/>
            <person name="Hass P.E."/>
            <person name="Heldens S."/>
            <person name="Huang A."/>
            <person name="Kim H.S."/>
            <person name="Klimowski L."/>
            <person name="Jin Y."/>
            <person name="Johnson S."/>
            <person name="Lee J."/>
            <person name="Lewis L."/>
            <person name="Liao D."/>
            <person name="Mark M.R."/>
            <person name="Robbie E."/>
            <person name="Sanchez C."/>
            <person name="Schoenfeld J."/>
            <person name="Seshagiri S."/>
            <person name="Simmons L."/>
            <person name="Singh J."/>
            <person name="Smith V."/>
            <person name="Stinson J."/>
            <person name="Vagts A."/>
            <person name="Vandlen R.L."/>
            <person name="Watanabe C."/>
            <person name="Wieand D."/>
            <person name="Woods K."/>
            <person name="Xie M.-H."/>
            <person name="Yansura D.G."/>
            <person name="Yi S."/>
            <person name="Yu G."/>
            <person name="Yuan J."/>
            <person name="Zhang M."/>
            <person name="Zhang Z."/>
            <person name="Goddard A.D."/>
            <person name="Wood W.I."/>
            <person name="Godowski P.J."/>
            <person name="Gray A.M."/>
        </authorList>
    </citation>
    <scope>NUCLEOTIDE SEQUENCE [LARGE SCALE MRNA] (ISOFORM 2)</scope>
    <scope>VARIANT GLY-208</scope>
</reference>
<reference key="5">
    <citation type="submission" date="2007-02" db="EMBL/GenBank/DDBJ databases">
        <authorList>
            <consortium name="NHLBI resequencing and genotyping service (RS&amp;G)"/>
        </authorList>
    </citation>
    <scope>NUCLEOTIDE SEQUENCE [GENOMIC DNA]</scope>
</reference>
<reference key="6">
    <citation type="journal article" date="2006" name="Nature">
        <title>Human chromosome 11 DNA sequence and analysis including novel gene identification.</title>
        <authorList>
            <person name="Taylor T.D."/>
            <person name="Noguchi H."/>
            <person name="Totoki Y."/>
            <person name="Toyoda A."/>
            <person name="Kuroki Y."/>
            <person name="Dewar K."/>
            <person name="Lloyd C."/>
            <person name="Itoh T."/>
            <person name="Takeda T."/>
            <person name="Kim D.-W."/>
            <person name="She X."/>
            <person name="Barlow K.F."/>
            <person name="Bloom T."/>
            <person name="Bruford E."/>
            <person name="Chang J.L."/>
            <person name="Cuomo C.A."/>
            <person name="Eichler E."/>
            <person name="FitzGerald M.G."/>
            <person name="Jaffe D.B."/>
            <person name="LaButti K."/>
            <person name="Nicol R."/>
            <person name="Park H.-S."/>
            <person name="Seaman C."/>
            <person name="Sougnez C."/>
            <person name="Yang X."/>
            <person name="Zimmer A.R."/>
            <person name="Zody M.C."/>
            <person name="Birren B.W."/>
            <person name="Nusbaum C."/>
            <person name="Fujiyama A."/>
            <person name="Hattori M."/>
            <person name="Rogers J."/>
            <person name="Lander E.S."/>
            <person name="Sakaki Y."/>
        </authorList>
    </citation>
    <scope>NUCLEOTIDE SEQUENCE [LARGE SCALE GENOMIC DNA]</scope>
</reference>
<reference key="7">
    <citation type="journal article" date="2004" name="Genome Res.">
        <title>The status, quality, and expansion of the NIH full-length cDNA project: the Mammalian Gene Collection (MGC).</title>
        <authorList>
            <consortium name="The MGC Project Team"/>
        </authorList>
    </citation>
    <scope>NUCLEOTIDE SEQUENCE [LARGE SCALE MRNA] (ISOFORMS 1 AND 3)</scope>
    <scope>VARIANT GLY-208</scope>
    <source>
        <tissue>Ovary</tissue>
        <tissue>Pancreas</tissue>
    </source>
</reference>
<reference key="8">
    <citation type="journal article" date="2014" name="Biochem. Biophys. Res. Commun.">
        <title>TMPRSS4 induces cancer cell invasion through pro-uPA processing.</title>
        <authorList>
            <person name="Min H.J."/>
            <person name="Lee M.K."/>
            <person name="Lee J.W."/>
            <person name="Kim S."/>
        </authorList>
    </citation>
    <scope>FUNCTION</scope>
    <scope>MUTAGENESIS OF ASP-290 AND SER-387</scope>
    <scope>SUBCELLULAR LOCATION</scope>
</reference>
<reference key="9">
    <citation type="journal article" date="2015" name="Br. J. Cancer">
        <title>TMPRSS4: an emerging potential therapeutic target in cancer.</title>
        <authorList>
            <person name="de Aberasturi A.L."/>
            <person name="Calvo A."/>
        </authorList>
    </citation>
    <scope>REVIEW OF FUNCTION</scope>
</reference>
<reference key="10">
    <citation type="journal article" date="2020" name="Sci. Immunol.">
        <title>TMPRSS2 and TMPRSS4 promote SARS-CoV-2 infection of human small intestinal enterocytes.</title>
        <authorList>
            <person name="Zang R."/>
            <person name="Gomez Castro M.F."/>
            <person name="McCune B.T."/>
            <person name="Zeng Q."/>
            <person name="Rothlauf P.W."/>
            <person name="Sonnek N.M."/>
            <person name="Liu Z."/>
            <person name="Brulois K.F."/>
            <person name="Wang X."/>
            <person name="Greenberg H.B."/>
            <person name="Diamond M.S."/>
            <person name="Ciorba M.A."/>
            <person name="Whelan S.P.J."/>
            <person name="Ding S."/>
        </authorList>
    </citation>
    <scope>FUNCTION (MICROBIAL INFECTION)</scope>
    <scope>TISSUE SPECIFICITY</scope>
</reference>
<name>TMPS4_HUMAN</name>
<protein>
    <recommendedName>
        <fullName evidence="17">Transmembrane protease serine 4</fullName>
        <ecNumber>3.4.21.-</ecNumber>
    </recommendedName>
    <alternativeName>
        <fullName>Channel-activating protease 2</fullName>
        <shortName>CAPH2</shortName>
    </alternativeName>
    <alternativeName>
        <fullName>Membrane-type serine protease 2</fullName>
        <shortName>MT-SP2</shortName>
    </alternativeName>
    <component>
        <recommendedName>
            <fullName>Transmembrane protease serine 4 catalytic chain</fullName>
        </recommendedName>
    </component>
</protein>
<sequence length="437" mass="48246">MLQDPDSDQPLNSLDVKPLRKPRIPMETFRKVGIPIIIALLSLASIIIVVVLIKVILDKYYFLCGQPLHFIPRKQLCDGELDCPLGEDEEHCVKSFPEGPAVAVRLSKDRSTLQVLDSATGNWFSACFDNFTEALAETACRQMGYSSKPTFRAVEIGPDQDLDVVEITENSQELRMRNSSGPCLSGSLVSLHCLACGKSLKTPRVVGVEEASVDSWPWQVSIQYDKQHVCGGSILDPHWVLTAAHCFRKHTDVFNWKVRAGSDKLGSFPSLAVAKIIIIEFNPMYPKDNDIALMKLQFPLTFSGTVRPICLPFFDEELTPATPLWIIGWGFTKQNGGKMSDILLQASVQVIDSTRCNADDAYQGEVTEKMMCAGIPEGGVDTCQGDSGGPLMYQSDQWHVVGIVSWGYGCGGPSTPGVYTKVSAYLNWIYNVWKAEL</sequence>
<dbReference type="EC" id="3.4.21.-"/>
<dbReference type="EMBL" id="AF179224">
    <property type="protein sequence ID" value="AAF74526.1"/>
    <property type="molecule type" value="mRNA"/>
</dbReference>
<dbReference type="EMBL" id="AF216312">
    <property type="protein sequence ID" value="AAF31436.1"/>
    <property type="status" value="ALT_FRAME"/>
    <property type="molecule type" value="mRNA"/>
</dbReference>
<dbReference type="EMBL" id="AK172766">
    <property type="protein sequence ID" value="BAD18749.1"/>
    <property type="molecule type" value="mRNA"/>
</dbReference>
<dbReference type="EMBL" id="AK303173">
    <property type="protein sequence ID" value="BAH13911.1"/>
    <property type="molecule type" value="mRNA"/>
</dbReference>
<dbReference type="EMBL" id="AY358530">
    <property type="protein sequence ID" value="AAQ88894.1"/>
    <property type="molecule type" value="mRNA"/>
</dbReference>
<dbReference type="EMBL" id="EF445038">
    <property type="protein sequence ID" value="ACA06088.1"/>
    <property type="molecule type" value="Genomic_DNA"/>
</dbReference>
<dbReference type="EMBL" id="AP000665">
    <property type="status" value="NOT_ANNOTATED_CDS"/>
    <property type="molecule type" value="Genomic_DNA"/>
</dbReference>
<dbReference type="EMBL" id="AP002800">
    <property type="status" value="NOT_ANNOTATED_CDS"/>
    <property type="molecule type" value="Genomic_DNA"/>
</dbReference>
<dbReference type="EMBL" id="BC004855">
    <property type="protein sequence ID" value="AAH04855.1"/>
    <property type="molecule type" value="mRNA"/>
</dbReference>
<dbReference type="EMBL" id="BC011703">
    <property type="protein sequence ID" value="AAH11703.1"/>
    <property type="molecule type" value="mRNA"/>
</dbReference>
<dbReference type="CCDS" id="CCDS31684.1">
    <molecule id="Q9NRS4-1"/>
</dbReference>
<dbReference type="CCDS" id="CCDS44743.1">
    <molecule id="Q9NRS4-2"/>
</dbReference>
<dbReference type="CCDS" id="CCDS53716.1">
    <molecule id="Q9NRS4-3"/>
</dbReference>
<dbReference type="CCDS" id="CCDS53717.1">
    <molecule id="Q9NRS4-4"/>
</dbReference>
<dbReference type="RefSeq" id="NP_001077416.2">
    <molecule id="Q9NRS4-2"/>
    <property type="nucleotide sequence ID" value="NM_001083947.2"/>
</dbReference>
<dbReference type="RefSeq" id="NP_001167022.2">
    <molecule id="Q9NRS4-3"/>
    <property type="nucleotide sequence ID" value="NM_001173551.2"/>
</dbReference>
<dbReference type="RefSeq" id="NP_001167023.2">
    <molecule id="Q9NRS4-4"/>
    <property type="nucleotide sequence ID" value="NM_001173552.2"/>
</dbReference>
<dbReference type="RefSeq" id="NP_063947.2">
    <molecule id="Q9NRS4-1"/>
    <property type="nucleotide sequence ID" value="NM_019894.4"/>
</dbReference>
<dbReference type="SMR" id="Q9NRS4"/>
<dbReference type="BioGRID" id="121163">
    <property type="interactions" value="310"/>
</dbReference>
<dbReference type="FunCoup" id="Q9NRS4">
    <property type="interactions" value="251"/>
</dbReference>
<dbReference type="IntAct" id="Q9NRS4">
    <property type="interactions" value="14"/>
</dbReference>
<dbReference type="STRING" id="9606.ENSP00000416037"/>
<dbReference type="BindingDB" id="Q9NRS4"/>
<dbReference type="ChEMBL" id="CHEMBL2331048"/>
<dbReference type="MEROPS" id="S01.034"/>
<dbReference type="GlyCosmos" id="Q9NRS4">
    <property type="glycosylation" value="2 sites, No reported glycans"/>
</dbReference>
<dbReference type="GlyGen" id="Q9NRS4">
    <property type="glycosylation" value="3 sites"/>
</dbReference>
<dbReference type="iPTMnet" id="Q9NRS4"/>
<dbReference type="PhosphoSitePlus" id="Q9NRS4"/>
<dbReference type="BioMuta" id="TMPRSS4"/>
<dbReference type="DMDM" id="317373304"/>
<dbReference type="jPOST" id="Q9NRS4"/>
<dbReference type="MassIVE" id="Q9NRS4"/>
<dbReference type="PaxDb" id="9606-ENSP00000477949"/>
<dbReference type="PeptideAtlas" id="Q9NRS4"/>
<dbReference type="ProteomicsDB" id="17874"/>
<dbReference type="ProteomicsDB" id="82418">
    <molecule id="Q9NRS4-1"/>
</dbReference>
<dbReference type="ProteomicsDB" id="82419">
    <molecule id="Q9NRS4-2"/>
</dbReference>
<dbReference type="ProteomicsDB" id="82420">
    <molecule id="Q9NRS4-3"/>
</dbReference>
<dbReference type="ABCD" id="Q9NRS4">
    <property type="antibodies" value="12 sequenced antibodies"/>
</dbReference>
<dbReference type="Antibodypedia" id="1732">
    <property type="antibodies" value="310 antibodies from 31 providers"/>
</dbReference>
<dbReference type="DNASU" id="56649"/>
<dbReference type="Ensembl" id="ENST00000437212.8">
    <molecule id="Q9NRS4-1"/>
    <property type="protein sequence ID" value="ENSP00000416037.3"/>
    <property type="gene ID" value="ENSG00000137648.20"/>
</dbReference>
<dbReference type="Ensembl" id="ENST00000522824.5">
    <molecule id="Q9NRS4-2"/>
    <property type="protein sequence ID" value="ENSP00000430547.1"/>
    <property type="gene ID" value="ENSG00000137648.20"/>
</dbReference>
<dbReference type="Ensembl" id="ENST00000523251.5">
    <molecule id="Q9NRS4-4"/>
    <property type="protein sequence ID" value="ENSP00000429209.1"/>
    <property type="gene ID" value="ENSG00000137648.20"/>
</dbReference>
<dbReference type="Ensembl" id="ENST00000534111.5">
    <molecule id="Q9NRS4-3"/>
    <property type="protein sequence ID" value="ENSP00000435184.1"/>
    <property type="gene ID" value="ENSG00000137648.20"/>
</dbReference>
<dbReference type="GeneID" id="56649"/>
<dbReference type="KEGG" id="hsa:56649"/>
<dbReference type="MANE-Select" id="ENST00000437212.8">
    <property type="protein sequence ID" value="ENSP00000416037.3"/>
    <property type="RefSeq nucleotide sequence ID" value="NM_019894.4"/>
    <property type="RefSeq protein sequence ID" value="NP_063947.2"/>
</dbReference>
<dbReference type="UCSC" id="uc010rxo.3">
    <molecule id="Q9NRS4-1"/>
    <property type="organism name" value="human"/>
</dbReference>
<dbReference type="AGR" id="HGNC:11878"/>
<dbReference type="CTD" id="56649"/>
<dbReference type="DisGeNET" id="56649"/>
<dbReference type="GeneCards" id="TMPRSS4"/>
<dbReference type="HGNC" id="HGNC:11878">
    <property type="gene designation" value="TMPRSS4"/>
</dbReference>
<dbReference type="HPA" id="ENSG00000137648">
    <property type="expression patterns" value="Tissue enhanced (esophagus, intestine, urinary bladder)"/>
</dbReference>
<dbReference type="MalaCards" id="TMPRSS4"/>
<dbReference type="MIM" id="606565">
    <property type="type" value="gene"/>
</dbReference>
<dbReference type="neXtProt" id="NX_Q9NRS4"/>
<dbReference type="OpenTargets" id="ENSG00000137648"/>
<dbReference type="Orphanet" id="363969">
    <property type="disease" value="Autosomal recessive cerebral atrophy"/>
</dbReference>
<dbReference type="PharmGKB" id="PA36579"/>
<dbReference type="VEuPathDB" id="HostDB:ENSG00000137648"/>
<dbReference type="eggNOG" id="KOG3627">
    <property type="taxonomic scope" value="Eukaryota"/>
</dbReference>
<dbReference type="GeneTree" id="ENSGT01020000230389"/>
<dbReference type="InParanoid" id="Q9NRS4"/>
<dbReference type="OMA" id="GNWASAC"/>
<dbReference type="OrthoDB" id="6380398at2759"/>
<dbReference type="PAN-GO" id="Q9NRS4">
    <property type="GO annotations" value="0 GO annotations based on evolutionary models"/>
</dbReference>
<dbReference type="PhylomeDB" id="Q9NRS4"/>
<dbReference type="TreeFam" id="TF351678"/>
<dbReference type="PathwayCommons" id="Q9NRS4"/>
<dbReference type="SignaLink" id="Q9NRS4"/>
<dbReference type="SIGNOR" id="Q9NRS4"/>
<dbReference type="BioGRID-ORCS" id="56649">
    <property type="hits" value="9 hits in 1155 CRISPR screens"/>
</dbReference>
<dbReference type="ChiTaRS" id="TMPRSS4">
    <property type="organism name" value="human"/>
</dbReference>
<dbReference type="GenomeRNAi" id="56649"/>
<dbReference type="Pharos" id="Q9NRS4">
    <property type="development level" value="Tbio"/>
</dbReference>
<dbReference type="PRO" id="PR:Q9NRS4"/>
<dbReference type="Proteomes" id="UP000005640">
    <property type="component" value="Chromosome 11"/>
</dbReference>
<dbReference type="RNAct" id="Q9NRS4">
    <property type="molecule type" value="protein"/>
</dbReference>
<dbReference type="Bgee" id="ENSG00000137648">
    <property type="expression patterns" value="Expressed in mucosa of transverse colon and 143 other cell types or tissues"/>
</dbReference>
<dbReference type="ExpressionAtlas" id="Q9NRS4">
    <property type="expression patterns" value="baseline and differential"/>
</dbReference>
<dbReference type="GO" id="GO:0005615">
    <property type="term" value="C:extracellular space"/>
    <property type="evidence" value="ECO:0000314"/>
    <property type="project" value="UniProtKB"/>
</dbReference>
<dbReference type="GO" id="GO:0016020">
    <property type="term" value="C:membrane"/>
    <property type="evidence" value="ECO:0000303"/>
    <property type="project" value="UniProtKB"/>
</dbReference>
<dbReference type="GO" id="GO:0005886">
    <property type="term" value="C:plasma membrane"/>
    <property type="evidence" value="ECO:0007669"/>
    <property type="project" value="UniProtKB-SubCell"/>
</dbReference>
<dbReference type="GO" id="GO:0030141">
    <property type="term" value="C:secretory granule"/>
    <property type="evidence" value="ECO:0000314"/>
    <property type="project" value="MGI"/>
</dbReference>
<dbReference type="GO" id="GO:0004252">
    <property type="term" value="F:serine-type endopeptidase activity"/>
    <property type="evidence" value="ECO:0000303"/>
    <property type="project" value="UniProtKB"/>
</dbReference>
<dbReference type="GO" id="GO:0008236">
    <property type="term" value="F:serine-type peptidase activity"/>
    <property type="evidence" value="ECO:0000314"/>
    <property type="project" value="UniProtKB"/>
</dbReference>
<dbReference type="GO" id="GO:0045967">
    <property type="term" value="P:negative regulation of growth rate"/>
    <property type="evidence" value="ECO:0000314"/>
    <property type="project" value="MGI"/>
</dbReference>
<dbReference type="GO" id="GO:0046598">
    <property type="term" value="P:positive regulation of viral entry into host cell"/>
    <property type="evidence" value="ECO:0000314"/>
    <property type="project" value="UniProtKB"/>
</dbReference>
<dbReference type="GO" id="GO:0016485">
    <property type="term" value="P:protein processing"/>
    <property type="evidence" value="ECO:0000314"/>
    <property type="project" value="UniProtKB"/>
</dbReference>
<dbReference type="GO" id="GO:0006508">
    <property type="term" value="P:proteolysis"/>
    <property type="evidence" value="ECO:0000314"/>
    <property type="project" value="UniProtKB"/>
</dbReference>
<dbReference type="GO" id="GO:0010468">
    <property type="term" value="P:regulation of gene expression"/>
    <property type="evidence" value="ECO:0000314"/>
    <property type="project" value="MGI"/>
</dbReference>
<dbReference type="GO" id="GO:0009611">
    <property type="term" value="P:response to wounding"/>
    <property type="evidence" value="ECO:0007669"/>
    <property type="project" value="Ensembl"/>
</dbReference>
<dbReference type="CDD" id="cd00112">
    <property type="entry name" value="LDLa"/>
    <property type="match status" value="1"/>
</dbReference>
<dbReference type="CDD" id="cd00190">
    <property type="entry name" value="Tryp_SPc"/>
    <property type="match status" value="1"/>
</dbReference>
<dbReference type="FunFam" id="3.10.250.10:FF:000046">
    <property type="entry name" value="Transmembrane protease serine 4"/>
    <property type="match status" value="1"/>
</dbReference>
<dbReference type="FunFam" id="2.40.10.10:FF:000003">
    <property type="entry name" value="Transmembrane serine protease 3"/>
    <property type="match status" value="1"/>
</dbReference>
<dbReference type="FunFam" id="4.10.400.10:FF:000141">
    <property type="entry name" value="Transmembrane serine protease 4"/>
    <property type="match status" value="1"/>
</dbReference>
<dbReference type="Gene3D" id="4.10.400.10">
    <property type="entry name" value="Low-density Lipoprotein Receptor"/>
    <property type="match status" value="1"/>
</dbReference>
<dbReference type="Gene3D" id="3.10.250.10">
    <property type="entry name" value="SRCR-like domain"/>
    <property type="match status" value="1"/>
</dbReference>
<dbReference type="Gene3D" id="2.40.10.10">
    <property type="entry name" value="Trypsin-like serine proteases"/>
    <property type="match status" value="1"/>
</dbReference>
<dbReference type="InterPro" id="IPR036055">
    <property type="entry name" value="LDL_receptor-like_sf"/>
</dbReference>
<dbReference type="InterPro" id="IPR002172">
    <property type="entry name" value="LDrepeatLR_classA_rpt"/>
</dbReference>
<dbReference type="InterPro" id="IPR009003">
    <property type="entry name" value="Peptidase_S1_PA"/>
</dbReference>
<dbReference type="InterPro" id="IPR043504">
    <property type="entry name" value="Peptidase_S1_PA_chymotrypsin"/>
</dbReference>
<dbReference type="InterPro" id="IPR001314">
    <property type="entry name" value="Peptidase_S1A"/>
</dbReference>
<dbReference type="InterPro" id="IPR001190">
    <property type="entry name" value="SRCR"/>
</dbReference>
<dbReference type="InterPro" id="IPR036772">
    <property type="entry name" value="SRCR-like_dom_sf"/>
</dbReference>
<dbReference type="InterPro" id="IPR001254">
    <property type="entry name" value="Trypsin_dom"/>
</dbReference>
<dbReference type="InterPro" id="IPR018114">
    <property type="entry name" value="TRYPSIN_HIS"/>
</dbReference>
<dbReference type="InterPro" id="IPR033116">
    <property type="entry name" value="TRYPSIN_SER"/>
</dbReference>
<dbReference type="PANTHER" id="PTHR24252">
    <property type="entry name" value="ACROSIN-RELATED"/>
    <property type="match status" value="1"/>
</dbReference>
<dbReference type="PANTHER" id="PTHR24252:SF17">
    <property type="entry name" value="SUPPRESSOR OF TUMORIGENICITY 14 PROTEIN HOMOLOG-RELATED"/>
    <property type="match status" value="1"/>
</dbReference>
<dbReference type="Pfam" id="PF15494">
    <property type="entry name" value="SRCR_2"/>
    <property type="match status" value="1"/>
</dbReference>
<dbReference type="Pfam" id="PF00089">
    <property type="entry name" value="Trypsin"/>
    <property type="match status" value="1"/>
</dbReference>
<dbReference type="PRINTS" id="PR00722">
    <property type="entry name" value="CHYMOTRYPSIN"/>
</dbReference>
<dbReference type="SMART" id="SM00192">
    <property type="entry name" value="LDLa"/>
    <property type="match status" value="1"/>
</dbReference>
<dbReference type="SMART" id="SM00202">
    <property type="entry name" value="SR"/>
    <property type="match status" value="1"/>
</dbReference>
<dbReference type="SMART" id="SM00020">
    <property type="entry name" value="Tryp_SPc"/>
    <property type="match status" value="1"/>
</dbReference>
<dbReference type="SUPFAM" id="SSF57424">
    <property type="entry name" value="LDL receptor-like module"/>
    <property type="match status" value="1"/>
</dbReference>
<dbReference type="SUPFAM" id="SSF56487">
    <property type="entry name" value="SRCR-like"/>
    <property type="match status" value="1"/>
</dbReference>
<dbReference type="SUPFAM" id="SSF50494">
    <property type="entry name" value="Trypsin-like serine proteases"/>
    <property type="match status" value="1"/>
</dbReference>
<dbReference type="PROSITE" id="PS50287">
    <property type="entry name" value="SRCR_2"/>
    <property type="match status" value="1"/>
</dbReference>
<dbReference type="PROSITE" id="PS50240">
    <property type="entry name" value="TRYPSIN_DOM"/>
    <property type="match status" value="1"/>
</dbReference>
<dbReference type="PROSITE" id="PS00134">
    <property type="entry name" value="TRYPSIN_HIS"/>
    <property type="match status" value="1"/>
</dbReference>
<dbReference type="PROSITE" id="PS00135">
    <property type="entry name" value="TRYPSIN_SER"/>
    <property type="match status" value="1"/>
</dbReference>
<proteinExistence type="evidence at protein level"/>
<keyword id="KW-0025">Alternative splicing</keyword>
<keyword id="KW-1003">Cell membrane</keyword>
<keyword id="KW-1015">Disulfide bond</keyword>
<keyword id="KW-0325">Glycoprotein</keyword>
<keyword id="KW-0945">Host-virus interaction</keyword>
<keyword id="KW-0378">Hydrolase</keyword>
<keyword id="KW-0472">Membrane</keyword>
<keyword id="KW-0645">Protease</keyword>
<keyword id="KW-1267">Proteomics identification</keyword>
<keyword id="KW-1185">Reference proteome</keyword>
<keyword id="KW-0964">Secreted</keyword>
<keyword id="KW-0720">Serine protease</keyword>
<keyword id="KW-0735">Signal-anchor</keyword>
<keyword id="KW-0812">Transmembrane</keyword>
<keyword id="KW-1133">Transmembrane helix</keyword>
<gene>
    <name evidence="20" type="primary">TMPRSS4</name>
    <name evidence="13" type="synonym">TMPRSS3</name>
    <name type="ORF">UNQ776/PRO1570</name>
</gene>
<comment type="function">
    <text evidence="2 10">Plasma membrane-anchored serine protease that directly induces processing of pro-uPA/PLAU into the active form through proteolytic activity (PubMed:24434139). Seems to be capable of activating ENaC (By similarity).</text>
</comment>
<comment type="function">
    <text evidence="11">(Microbial infection) In gut epithelial cells, facilitates human coronavirus SARS-CoV-2 infection through, at least, the cleavage of coronavirus spike glycoproteins which activates the glycoprotein for host cell entry.</text>
</comment>
<comment type="interaction">
    <interactant intactId="EBI-10313040">
        <id>Q9NRS4</id>
    </interactant>
    <interactant intactId="EBI-849893">
        <id>O60238</id>
        <label>BNIP3L</label>
    </interactant>
    <organismsDiffer>false</organismsDiffer>
    <experiments>3</experiments>
</comment>
<comment type="interaction">
    <interactant intactId="EBI-10313040">
        <id>Q9NRS4</id>
    </interactant>
    <interactant intactId="EBI-17274839">
        <id>P58418</id>
        <label>CLRN1</label>
    </interactant>
    <organismsDiffer>false</organismsDiffer>
    <experiments>3</experiments>
</comment>
<comment type="interaction">
    <interactant intactId="EBI-10313040">
        <id>Q9NRS4</id>
    </interactant>
    <interactant intactId="EBI-9087876">
        <id>P48730-2</id>
        <label>CSNK1D</label>
    </interactant>
    <organismsDiffer>false</organismsDiffer>
    <experiments>3</experiments>
</comment>
<comment type="interaction">
    <interactant intactId="EBI-10313040">
        <id>Q9NRS4</id>
    </interactant>
    <interactant intactId="EBI-17973325">
        <id>P60508</id>
        <label>ERVFRD-1</label>
    </interactant>
    <organismsDiffer>false</organismsDiffer>
    <experiments>3</experiments>
</comment>
<comment type="interaction">
    <interactant intactId="EBI-10313040">
        <id>Q9NRS4</id>
    </interactant>
    <interactant intactId="EBI-18304435">
        <id>Q5JX71</id>
        <label>FAM209A</label>
    </interactant>
    <organismsDiffer>false</organismsDiffer>
    <experiments>3</experiments>
</comment>
<comment type="interaction">
    <interactant intactId="EBI-10313040">
        <id>Q9NRS4</id>
    </interactant>
    <interactant intactId="EBI-12142257">
        <id>Q8TBE3</id>
        <label>FNDC9</label>
    </interactant>
    <organismsDiffer>false</organismsDiffer>
    <experiments>3</experiments>
</comment>
<comment type="interaction">
    <interactant intactId="EBI-10313040">
        <id>Q9NRS4</id>
    </interactant>
    <interactant intactId="EBI-11721746">
        <id>Q8TED1</id>
        <label>GPX8</label>
    </interactant>
    <organismsDiffer>false</organismsDiffer>
    <experiments>3</experiments>
</comment>
<comment type="interaction">
    <interactant intactId="EBI-10313040">
        <id>Q9NRS4</id>
    </interactant>
    <interactant intactId="EBI-749265">
        <id>Q8N6L0</id>
        <label>KASH5</label>
    </interactant>
    <organismsDiffer>false</organismsDiffer>
    <experiments>3</experiments>
</comment>
<comment type="interaction">
    <interactant intactId="EBI-10313040">
        <id>Q9NRS4</id>
    </interactant>
    <interactant intactId="EBI-12816371">
        <id>Q8TDF6-2</id>
        <label>RASGRP4</label>
    </interactant>
    <organismsDiffer>false</organismsDiffer>
    <experiments>3</experiments>
</comment>
<comment type="interaction">
    <interactant intactId="EBI-10313040">
        <id>Q9NRS4</id>
    </interactant>
    <interactant intactId="EBI-17640454">
        <id>Q96PQ1</id>
        <label>SIGLEC12</label>
    </interactant>
    <organismsDiffer>false</organismsDiffer>
    <experiments>3</experiments>
</comment>
<comment type="interaction">
    <interactant intactId="EBI-10313040">
        <id>Q9NRS4</id>
    </interactant>
    <interactant intactId="EBI-18194029">
        <id>Q96L08</id>
        <label>SUSD3</label>
    </interactant>
    <organismsDiffer>false</organismsDiffer>
    <experiments>3</experiments>
</comment>
<comment type="interaction">
    <interactant intactId="EBI-10313040">
        <id>Q9NRS4</id>
    </interactant>
    <interactant intactId="EBI-8649725">
        <id>Q9BSE2</id>
        <label>TMEM79</label>
    </interactant>
    <organismsDiffer>false</organismsDiffer>
    <experiments>3</experiments>
</comment>
<comment type="interaction">
    <interactant intactId="EBI-10312990">
        <id>Q9NRS4-3</id>
    </interactant>
    <interactant intactId="EBI-3939278">
        <id>Q9BXN2</id>
        <label>CLEC7A</label>
    </interactant>
    <organismsDiffer>false</organismsDiffer>
    <experiments>3</experiments>
</comment>
<comment type="interaction">
    <interactant intactId="EBI-10312990">
        <id>Q9NRS4-3</id>
    </interactant>
    <interactant intactId="EBI-749265">
        <id>Q8N6L0</id>
        <label>KASH5</label>
    </interactant>
    <organismsDiffer>false</organismsDiffer>
    <experiments>3</experiments>
</comment>
<comment type="interaction">
    <interactant intactId="EBI-10312990">
        <id>Q9NRS4-3</id>
    </interactant>
    <interactant intactId="EBI-7131783">
        <id>Q8N205</id>
        <label>SYNE4</label>
    </interactant>
    <organismsDiffer>false</organismsDiffer>
    <experiments>3</experiments>
</comment>
<comment type="interaction">
    <interactant intactId="EBI-10312990">
        <id>Q9NRS4-3</id>
    </interactant>
    <interactant intactId="EBI-8649725">
        <id>Q9BSE2</id>
        <label>TMEM79</label>
    </interactant>
    <organismsDiffer>false</organismsDiffer>
    <experiments>3</experiments>
</comment>
<comment type="subcellular location">
    <subcellularLocation>
        <location evidence="18">Cell membrane</location>
        <topology evidence="17">Single-pass type II membrane protein</topology>
    </subcellularLocation>
</comment>
<comment type="subcellular location">
    <molecule>Transmembrane protease serine 4 catalytic chain</molecule>
    <subcellularLocation>
        <location evidence="10">Secreted</location>
    </subcellularLocation>
    <text evidence="10">Activated by cleavage and secreted.</text>
</comment>
<comment type="alternative products">
    <event type="alternative splicing"/>
    <isoform>
        <id>Q9NRS4-1</id>
        <name>1</name>
        <sequence type="displayed"/>
    </isoform>
    <isoform>
        <id>Q9NRS4-2</id>
        <name>2</name>
        <sequence type="described" ref="VSP_013117"/>
    </isoform>
    <isoform>
        <id>Q9NRS4-3</id>
        <name>3</name>
        <sequence type="described" ref="VSP_013116"/>
    </isoform>
    <isoform>
        <id>Q9NRS4-4</id>
        <name>4</name>
        <sequence type="described" ref="VSP_013116 VSP_054229"/>
    </isoform>
</comment>
<comment type="tissue specificity">
    <text evidence="6 11">High levels in pancreatic, gastric, colorectal and ampullary cancer. Very weak expression in normal gastrointestinal and urogenital tract (PubMed:10825129). Coexpressed with ACE2 within mature enterocytes (PubMed:32404436).</text>
</comment>
<comment type="PTM">
    <text evidence="19">Proteolytically processed; probably by an autocatalytic mechanism.</text>
</comment>
<comment type="similarity">
    <text evidence="5">Belongs to the peptidase S1 family.</text>
</comment>
<comment type="sequence caution" evidence="17">
    <conflict type="frameshift">
        <sequence resource="EMBL-CDS" id="AAF31436"/>
    </conflict>
</comment>
<comment type="online information" name="Atlas of Genetics and Cytogenetics in Oncology and Haematology">
    <link uri="https://atlasgeneticsoncology.org/gene/42594/TMPRSS4"/>
</comment>